<comment type="function">
    <text evidence="1">Type-I myosin implicated in the organization of the actin cytoskeleton. Required for proper actin cytoskeleton polarization. At the cell cortex, assembles in patch-like structures together with proteins from the actin-polymerizing machinery and promotes actin assembly. Functions as actin nucleation-promoting factor (NPF) for the Arp2/3 complex (By similarity).</text>
</comment>
<comment type="subcellular location">
    <subcellularLocation>
        <location evidence="1">Cytoplasm</location>
        <location evidence="1">Cytoskeleton</location>
        <location evidence="1">Actin patch</location>
    </subcellularLocation>
</comment>
<comment type="domain">
    <text evidence="1">The myosin motor domain displays actin-stimulated ATPase activity and generates a mechanochemical force.</text>
</comment>
<comment type="domain">
    <text evidence="1">The tail domain participates in molecular interactions that specify the role of the motor domain (By similarity). It is composed of several tail homology (TH) domains, namely a putative phospholipid-binding myosin tail domain (also named TH1), an Ala- and Pro-rich domain (TH2), followed by an SH3 domain and a C-terminal acidic domain (TH3).</text>
</comment>
<comment type="PTM">
    <text evidence="1">Phosphorylation of the TEDS site (Ser-369) is required for the polarization of the actin cytoskeleton. Phosphorylation probably activates the myosin-I ATPase activity (By similarity).</text>
</comment>
<comment type="similarity">
    <text evidence="7">Belongs to the TRAFAC class myosin-kinesin ATPase superfamily. Myosin family.</text>
</comment>
<comment type="sequence caution" evidence="7">
    <conflict type="erroneous gene model prediction">
        <sequence resource="EMBL-CDS" id="EDP44604"/>
    </conflict>
</comment>
<accession>A8PWF6</accession>
<sequence>MVISKRAGGRRAAGGAAAQAAPPVNRGIAKADWREGFKKPQAGVSDMTLLTQITNEAVNDNLHKRFSNAEIYTYIGNVLISVNPFRDLGIYTDEILRSYRGKNRLEMPPHVYAIAEGAYYNMLAYKENQCVIISGESGAGKTEAAKRIMQYIAAVSGDTTGTGSTSSGIHTIKDMVLATNPLLESFGCAKTLRNNNSSRHGKYLEIMFDANGSPVGATITNYLLEKARVVGQIRNERNFHIFYQLTKAASPQQRELFGLQGPEAYAYTADSQCLDVPGIDDHADFAAAFEAMRIIGLTDDEQMSMVRMLATILWLGNVHFVENAQGDAELANPDVTAFCAYLLEVDPSAVQRALTQRIMETQRGGRRGSVYEVPLNPTQAAAVRDALSKAIYNNLFDWIVARINRSLQAQSQTAASVIGVLDIYGFEIFENNSFEQLCINYVNEKLQQIFIELTLKKEQEEYAQEQIQWTPIQYFNNKIVCDLIEAKRPPGIFSALNDAVATAHADSSAADNSFMQRTSMLSSNPHFEARGSKFLVRHYAGDVMYNVQGMTEKNKDALLKDILNLVDSSSNAFLIGLFPERPDPNSKKRPPSAGDRIKASANALVDNLMQAQPSYIRTIKPNQNKSPTEYDTQAVLHQIKYLGLRENIRVRRAGFAYRNTFEKIVQRFYLLSRATSYAGDYIWQGDARSGCERIFLDTGIARDEWQLGVTKGFIKNPETLFALETMRDRYWHNMAMRIQRAWRAFMRRREESARRIQRAWRRSREGHEFLELREYGHQLLAGRKERRRFSLISMRRFMGDYLDLNGSSAEGRMLRASANLPPNEPIVFSARAQLLVSRLGRTSIPSPRFLLMSPRAVYILVTHLVNKRPQTTCERVIPLSTIRQVGLSTLRDDWIVLQVGTDEGDPLLHCDFKTEFVAYLLQQTGGRTHVVIAPQLEYVRKGRKKAHVSFRKDESIPVGDVYKSSIVSVGSGEPPTSVSRPPAKKLPRSAQPSTKRRTTSRPVTSRRPVPTVLPTTTASRGLPPAPGGTASASALAVPTTSTVAPASSASGNASGARHVPAPPPVSGGSGLPPYLQAPATSAPSSGMPSYLQRAVPAAPTAPAAPAASAAPTAAQSTSGIPSYLGSSTTKLAPPVTVQQLGSSSTAQTRSVPAPPSASATPAVATPALAPVKAAPLPPPPPTGRRLPRYRALYDFETQEAGELPLRTGDIVELEEKEENGWWLVKKGSTEGWSPADYLELIAEPAAAKPRPPPPAKPASAKPAAAPARVSQSSVTSSWTPPDSHAAPVAVMPGMGDPGGFAAILARKKAERAAAAEQAHVPE</sequence>
<dbReference type="EMBL" id="AAYY01000003">
    <property type="protein sequence ID" value="EDP44604.1"/>
    <property type="status" value="ALT_SEQ"/>
    <property type="molecule type" value="Genomic_DNA"/>
</dbReference>
<dbReference type="RefSeq" id="XP_001731818.1">
    <property type="nucleotide sequence ID" value="XM_001731766.1"/>
</dbReference>
<dbReference type="SMR" id="A8PWF6"/>
<dbReference type="FunCoup" id="A8PWF6">
    <property type="interactions" value="82"/>
</dbReference>
<dbReference type="STRING" id="425265.A8PWF6"/>
<dbReference type="GeneID" id="5856123"/>
<dbReference type="KEGG" id="mgl:MGL_1086"/>
<dbReference type="VEuPathDB" id="FungiDB:MGL_1086"/>
<dbReference type="InParanoid" id="A8PWF6"/>
<dbReference type="OrthoDB" id="6108017at2759"/>
<dbReference type="Proteomes" id="UP000008837">
    <property type="component" value="Unassembled WGS sequence"/>
</dbReference>
<dbReference type="GO" id="GO:0030479">
    <property type="term" value="C:actin cortical patch"/>
    <property type="evidence" value="ECO:0007669"/>
    <property type="project" value="UniProtKB-SubCell"/>
</dbReference>
<dbReference type="GO" id="GO:0051286">
    <property type="term" value="C:cell tip"/>
    <property type="evidence" value="ECO:0007669"/>
    <property type="project" value="TreeGrafter"/>
</dbReference>
<dbReference type="GO" id="GO:0016459">
    <property type="term" value="C:myosin complex"/>
    <property type="evidence" value="ECO:0007669"/>
    <property type="project" value="UniProtKB-KW"/>
</dbReference>
<dbReference type="GO" id="GO:0005886">
    <property type="term" value="C:plasma membrane"/>
    <property type="evidence" value="ECO:0007669"/>
    <property type="project" value="TreeGrafter"/>
</dbReference>
<dbReference type="GO" id="GO:0051015">
    <property type="term" value="F:actin filament binding"/>
    <property type="evidence" value="ECO:0007669"/>
    <property type="project" value="TreeGrafter"/>
</dbReference>
<dbReference type="GO" id="GO:0005524">
    <property type="term" value="F:ATP binding"/>
    <property type="evidence" value="ECO:0007669"/>
    <property type="project" value="UniProtKB-KW"/>
</dbReference>
<dbReference type="GO" id="GO:0016787">
    <property type="term" value="F:hydrolase activity"/>
    <property type="evidence" value="ECO:0007669"/>
    <property type="project" value="UniProtKB-KW"/>
</dbReference>
<dbReference type="GO" id="GO:0000146">
    <property type="term" value="F:microfilament motor activity"/>
    <property type="evidence" value="ECO:0007669"/>
    <property type="project" value="TreeGrafter"/>
</dbReference>
<dbReference type="GO" id="GO:0051666">
    <property type="term" value="P:actin cortical patch localization"/>
    <property type="evidence" value="ECO:0007669"/>
    <property type="project" value="TreeGrafter"/>
</dbReference>
<dbReference type="GO" id="GO:0007015">
    <property type="term" value="P:actin filament organization"/>
    <property type="evidence" value="ECO:0007669"/>
    <property type="project" value="TreeGrafter"/>
</dbReference>
<dbReference type="GO" id="GO:0006897">
    <property type="term" value="P:endocytosis"/>
    <property type="evidence" value="ECO:0007669"/>
    <property type="project" value="TreeGrafter"/>
</dbReference>
<dbReference type="CDD" id="cd01378">
    <property type="entry name" value="MYSc_Myo1"/>
    <property type="match status" value="1"/>
</dbReference>
<dbReference type="CDD" id="cd11858">
    <property type="entry name" value="SH3_Myosin-I_fungi"/>
    <property type="match status" value="1"/>
</dbReference>
<dbReference type="FunFam" id="1.10.10.820:FF:000001">
    <property type="entry name" value="Myosin heavy chain"/>
    <property type="match status" value="1"/>
</dbReference>
<dbReference type="FunFam" id="1.20.120.720:FF:000015">
    <property type="entry name" value="Myosin I"/>
    <property type="match status" value="1"/>
</dbReference>
<dbReference type="FunFam" id="1.20.5.4820:FF:000004">
    <property type="entry name" value="Myosin IE"/>
    <property type="match status" value="1"/>
</dbReference>
<dbReference type="FunFam" id="1.20.58.530:FF:000007">
    <property type="entry name" value="Myosin IE"/>
    <property type="match status" value="1"/>
</dbReference>
<dbReference type="Gene3D" id="1.10.10.820">
    <property type="match status" value="1"/>
</dbReference>
<dbReference type="Gene3D" id="1.20.5.4820">
    <property type="match status" value="1"/>
</dbReference>
<dbReference type="Gene3D" id="1.20.58.530">
    <property type="match status" value="1"/>
</dbReference>
<dbReference type="Gene3D" id="3.40.850.10">
    <property type="entry name" value="Kinesin motor domain"/>
    <property type="match status" value="1"/>
</dbReference>
<dbReference type="Gene3D" id="1.20.120.720">
    <property type="entry name" value="Myosin VI head, motor domain, U50 subdomain"/>
    <property type="match status" value="1"/>
</dbReference>
<dbReference type="Gene3D" id="2.30.30.40">
    <property type="entry name" value="SH3 Domains"/>
    <property type="match status" value="1"/>
</dbReference>
<dbReference type="InterPro" id="IPR035535">
    <property type="entry name" value="Fungal_myosin-I_SH3"/>
</dbReference>
<dbReference type="InterPro" id="IPR036961">
    <property type="entry name" value="Kinesin_motor_dom_sf"/>
</dbReference>
<dbReference type="InterPro" id="IPR001609">
    <property type="entry name" value="Myosin_head_motor_dom-like"/>
</dbReference>
<dbReference type="InterPro" id="IPR010926">
    <property type="entry name" value="Myosin_TH1"/>
</dbReference>
<dbReference type="InterPro" id="IPR036072">
    <property type="entry name" value="MYSc_Myo1"/>
</dbReference>
<dbReference type="InterPro" id="IPR027417">
    <property type="entry name" value="P-loop_NTPase"/>
</dbReference>
<dbReference type="InterPro" id="IPR036028">
    <property type="entry name" value="SH3-like_dom_sf"/>
</dbReference>
<dbReference type="InterPro" id="IPR001452">
    <property type="entry name" value="SH3_domain"/>
</dbReference>
<dbReference type="PANTHER" id="PTHR13140">
    <property type="entry name" value="MYOSIN"/>
    <property type="match status" value="1"/>
</dbReference>
<dbReference type="PANTHER" id="PTHR13140:SF837">
    <property type="entry name" value="MYOSIN-3-RELATED"/>
    <property type="match status" value="1"/>
</dbReference>
<dbReference type="Pfam" id="PF00063">
    <property type="entry name" value="Myosin_head"/>
    <property type="match status" value="1"/>
</dbReference>
<dbReference type="Pfam" id="PF06017">
    <property type="entry name" value="Myosin_TH1"/>
    <property type="match status" value="1"/>
</dbReference>
<dbReference type="Pfam" id="PF00018">
    <property type="entry name" value="SH3_1"/>
    <property type="match status" value="1"/>
</dbReference>
<dbReference type="PRINTS" id="PR00193">
    <property type="entry name" value="MYOSINHEAVY"/>
</dbReference>
<dbReference type="SMART" id="SM00242">
    <property type="entry name" value="MYSc"/>
    <property type="match status" value="1"/>
</dbReference>
<dbReference type="SMART" id="SM00326">
    <property type="entry name" value="SH3"/>
    <property type="match status" value="1"/>
</dbReference>
<dbReference type="SUPFAM" id="SSF52540">
    <property type="entry name" value="P-loop containing nucleoside triphosphate hydrolases"/>
    <property type="match status" value="1"/>
</dbReference>
<dbReference type="SUPFAM" id="SSF50044">
    <property type="entry name" value="SH3-domain"/>
    <property type="match status" value="1"/>
</dbReference>
<dbReference type="PROSITE" id="PS51456">
    <property type="entry name" value="MYOSIN_MOTOR"/>
    <property type="match status" value="1"/>
</dbReference>
<dbReference type="PROSITE" id="PS50002">
    <property type="entry name" value="SH3"/>
    <property type="match status" value="1"/>
</dbReference>
<dbReference type="PROSITE" id="PS51757">
    <property type="entry name" value="TH1"/>
    <property type="match status" value="1"/>
</dbReference>
<evidence type="ECO:0000250" key="1"/>
<evidence type="ECO:0000255" key="2"/>
<evidence type="ECO:0000255" key="3">
    <source>
        <dbReference type="PROSITE-ProRule" id="PRU00192"/>
    </source>
</evidence>
<evidence type="ECO:0000255" key="4">
    <source>
        <dbReference type="PROSITE-ProRule" id="PRU00782"/>
    </source>
</evidence>
<evidence type="ECO:0000255" key="5">
    <source>
        <dbReference type="PROSITE-ProRule" id="PRU01093"/>
    </source>
</evidence>
<evidence type="ECO:0000256" key="6">
    <source>
        <dbReference type="SAM" id="MobiDB-lite"/>
    </source>
</evidence>
<evidence type="ECO:0000305" key="7"/>
<protein>
    <recommendedName>
        <fullName>Myosin-1</fullName>
    </recommendedName>
    <alternativeName>
        <fullName>Class I unconventional myosin</fullName>
    </alternativeName>
    <alternativeName>
        <fullName>Type I myosin</fullName>
    </alternativeName>
</protein>
<gene>
    <name type="primary">MYO1</name>
    <name type="ORF">MGL_1086</name>
</gene>
<keyword id="KW-0009">Actin-binding</keyword>
<keyword id="KW-0067">ATP-binding</keyword>
<keyword id="KW-0963">Cytoplasm</keyword>
<keyword id="KW-0206">Cytoskeleton</keyword>
<keyword id="KW-0378">Hydrolase</keyword>
<keyword id="KW-0505">Motor protein</keyword>
<keyword id="KW-0518">Myosin</keyword>
<keyword id="KW-0547">Nucleotide-binding</keyword>
<keyword id="KW-0597">Phosphoprotein</keyword>
<keyword id="KW-1185">Reference proteome</keyword>
<keyword id="KW-0677">Repeat</keyword>
<keyword id="KW-0728">SH3 domain</keyword>
<reference key="1">
    <citation type="journal article" date="2007" name="Proc. Natl. Acad. Sci. U.S.A.">
        <title>Dandruff-associated Malassezia genomes reveal convergent and divergent virulence traits shared with plant and human fungal pathogens.</title>
        <authorList>
            <person name="Xu J."/>
            <person name="Saunders C.W."/>
            <person name="Hu P."/>
            <person name="Grant R.A."/>
            <person name="Boekhout T."/>
            <person name="Kuramae E.E."/>
            <person name="Kronstad J.W."/>
            <person name="DeAngelis Y.M."/>
            <person name="Reeder N.L."/>
            <person name="Johnstone K.R."/>
            <person name="Leland M."/>
            <person name="Fieno A.M."/>
            <person name="Begley W.M."/>
            <person name="Sun Y."/>
            <person name="Lacey M.P."/>
            <person name="Chaudhary T."/>
            <person name="Keough T."/>
            <person name="Chu L."/>
            <person name="Sears R."/>
            <person name="Yuan B."/>
            <person name="Dawson T.L. Jr."/>
        </authorList>
    </citation>
    <scope>NUCLEOTIDE SEQUENCE [LARGE SCALE GENOMIC DNA]</scope>
    <source>
        <strain>ATCC MYA-4612 / CBS 7966</strain>
    </source>
</reference>
<feature type="chain" id="PRO_0000338556" description="Myosin-1">
    <location>
        <begin position="1"/>
        <end position="1322"/>
    </location>
</feature>
<feature type="domain" description="Myosin motor" evidence="4">
    <location>
        <begin position="42"/>
        <end position="728"/>
    </location>
</feature>
<feature type="domain" description="IQ 1">
    <location>
        <begin position="732"/>
        <end position="752"/>
    </location>
</feature>
<feature type="domain" description="IQ 2">
    <location>
        <begin position="753"/>
        <end position="778"/>
    </location>
</feature>
<feature type="domain" description="TH1" evidence="5">
    <location>
        <begin position="786"/>
        <end position="980"/>
    </location>
</feature>
<feature type="domain" description="SH3" evidence="3">
    <location>
        <begin position="1184"/>
        <end position="1243"/>
    </location>
</feature>
<feature type="region of interest" description="Actin-binding" evidence="1">
    <location>
        <begin position="417"/>
        <end position="499"/>
    </location>
</feature>
<feature type="region of interest" description="Disordered" evidence="6">
    <location>
        <begin position="966"/>
        <end position="1090"/>
    </location>
</feature>
<feature type="region of interest" description="Disordered" evidence="6">
    <location>
        <begin position="1137"/>
        <end position="1162"/>
    </location>
</feature>
<feature type="region of interest" description="Disordered" evidence="6">
    <location>
        <begin position="1246"/>
        <end position="1300"/>
    </location>
</feature>
<feature type="compositionally biased region" description="Low complexity" evidence="6">
    <location>
        <begin position="1000"/>
        <end position="1017"/>
    </location>
</feature>
<feature type="compositionally biased region" description="Low complexity" evidence="6">
    <location>
        <begin position="1027"/>
        <end position="1056"/>
    </location>
</feature>
<feature type="compositionally biased region" description="Polar residues" evidence="6">
    <location>
        <begin position="1078"/>
        <end position="1087"/>
    </location>
</feature>
<feature type="compositionally biased region" description="Polar residues" evidence="6">
    <location>
        <begin position="1137"/>
        <end position="1148"/>
    </location>
</feature>
<feature type="compositionally biased region" description="Low complexity" evidence="6">
    <location>
        <begin position="1257"/>
        <end position="1267"/>
    </location>
</feature>
<feature type="compositionally biased region" description="Polar residues" evidence="6">
    <location>
        <begin position="1269"/>
        <end position="1280"/>
    </location>
</feature>
<feature type="binding site" evidence="2">
    <location>
        <begin position="135"/>
        <end position="142"/>
    </location>
    <ligand>
        <name>ATP</name>
        <dbReference type="ChEBI" id="CHEBI:30616"/>
    </ligand>
</feature>
<feature type="modified residue" description="Phosphoserine" evidence="1">
    <location>
        <position position="369"/>
    </location>
</feature>
<name>MYO1_MALGO</name>
<organism>
    <name type="scientific">Malassezia globosa (strain ATCC MYA-4612 / CBS 7966)</name>
    <name type="common">Dandruff-associated fungus</name>
    <dbReference type="NCBI Taxonomy" id="425265"/>
    <lineage>
        <taxon>Eukaryota</taxon>
        <taxon>Fungi</taxon>
        <taxon>Dikarya</taxon>
        <taxon>Basidiomycota</taxon>
        <taxon>Ustilaginomycotina</taxon>
        <taxon>Malasseziomycetes</taxon>
        <taxon>Malasseziales</taxon>
        <taxon>Malasseziaceae</taxon>
        <taxon>Malassezia</taxon>
    </lineage>
</organism>
<proteinExistence type="inferred from homology"/>